<proteinExistence type="inferred from homology"/>
<protein>
    <recommendedName>
        <fullName evidence="1">Alanine--tRNA ligase</fullName>
        <ecNumber evidence="1">6.1.1.7</ecNumber>
    </recommendedName>
    <alternativeName>
        <fullName evidence="1">Alanyl-tRNA synthetase</fullName>
        <shortName evidence="1">AlaRS</shortName>
    </alternativeName>
</protein>
<accession>Q11V49</accession>
<evidence type="ECO:0000255" key="1">
    <source>
        <dbReference type="HAMAP-Rule" id="MF_00036"/>
    </source>
</evidence>
<comment type="function">
    <text evidence="1">Catalyzes the attachment of alanine to tRNA(Ala) in a two-step reaction: alanine is first activated by ATP to form Ala-AMP and then transferred to the acceptor end of tRNA(Ala). Also edits incorrectly charged Ser-tRNA(Ala) and Gly-tRNA(Ala) via its editing domain.</text>
</comment>
<comment type="catalytic activity">
    <reaction evidence="1">
        <text>tRNA(Ala) + L-alanine + ATP = L-alanyl-tRNA(Ala) + AMP + diphosphate</text>
        <dbReference type="Rhea" id="RHEA:12540"/>
        <dbReference type="Rhea" id="RHEA-COMP:9657"/>
        <dbReference type="Rhea" id="RHEA-COMP:9923"/>
        <dbReference type="ChEBI" id="CHEBI:30616"/>
        <dbReference type="ChEBI" id="CHEBI:33019"/>
        <dbReference type="ChEBI" id="CHEBI:57972"/>
        <dbReference type="ChEBI" id="CHEBI:78442"/>
        <dbReference type="ChEBI" id="CHEBI:78497"/>
        <dbReference type="ChEBI" id="CHEBI:456215"/>
        <dbReference type="EC" id="6.1.1.7"/>
    </reaction>
</comment>
<comment type="cofactor">
    <cofactor evidence="1">
        <name>Zn(2+)</name>
        <dbReference type="ChEBI" id="CHEBI:29105"/>
    </cofactor>
    <text evidence="1">Binds 1 zinc ion per subunit.</text>
</comment>
<comment type="subcellular location">
    <subcellularLocation>
        <location evidence="1">Cytoplasm</location>
    </subcellularLocation>
</comment>
<comment type="domain">
    <text evidence="1">Consists of three domains; the N-terminal catalytic domain, the editing domain and the C-terminal C-Ala domain. The editing domain removes incorrectly charged amino acids, while the C-Ala domain, along with tRNA(Ala), serves as a bridge to cooperatively bring together the editing and aminoacylation centers thus stimulating deacylation of misacylated tRNAs.</text>
</comment>
<comment type="similarity">
    <text evidence="1">Belongs to the class-II aminoacyl-tRNA synthetase family.</text>
</comment>
<reference key="1">
    <citation type="journal article" date="2007" name="Appl. Environ. Microbiol.">
        <title>Genome sequence of the cellulolytic gliding bacterium Cytophaga hutchinsonii.</title>
        <authorList>
            <person name="Xie G."/>
            <person name="Bruce D.C."/>
            <person name="Challacombe J.F."/>
            <person name="Chertkov O."/>
            <person name="Detter J.C."/>
            <person name="Gilna P."/>
            <person name="Han C.S."/>
            <person name="Lucas S."/>
            <person name="Misra M."/>
            <person name="Myers G.L."/>
            <person name="Richardson P."/>
            <person name="Tapia R."/>
            <person name="Thayer N."/>
            <person name="Thompson L.S."/>
            <person name="Brettin T.S."/>
            <person name="Henrissat B."/>
            <person name="Wilson D.B."/>
            <person name="McBride M.J."/>
        </authorList>
    </citation>
    <scope>NUCLEOTIDE SEQUENCE [LARGE SCALE GENOMIC DNA]</scope>
    <source>
        <strain>ATCC 33406 / DSM 1761 / JCM 20678 / CIP 103989 / IAM 12607 / NBRC 15051 / NCIMB 9469 / D465</strain>
    </source>
</reference>
<feature type="chain" id="PRO_0000347579" description="Alanine--tRNA ligase">
    <location>
        <begin position="1"/>
        <end position="877"/>
    </location>
</feature>
<feature type="binding site" evidence="1">
    <location>
        <position position="563"/>
    </location>
    <ligand>
        <name>Zn(2+)</name>
        <dbReference type="ChEBI" id="CHEBI:29105"/>
    </ligand>
</feature>
<feature type="binding site" evidence="1">
    <location>
        <position position="567"/>
    </location>
    <ligand>
        <name>Zn(2+)</name>
        <dbReference type="ChEBI" id="CHEBI:29105"/>
    </ligand>
</feature>
<feature type="binding site" evidence="1">
    <location>
        <position position="667"/>
    </location>
    <ligand>
        <name>Zn(2+)</name>
        <dbReference type="ChEBI" id="CHEBI:29105"/>
    </ligand>
</feature>
<feature type="binding site" evidence="1">
    <location>
        <position position="671"/>
    </location>
    <ligand>
        <name>Zn(2+)</name>
        <dbReference type="ChEBI" id="CHEBI:29105"/>
    </ligand>
</feature>
<sequence>MTSAEIRQQFLDFFASKGHQIVPSAPIVNKNDPTLMFTNAGMNQFKDYFLGNETPKYRRIADTQKCLRVSGKHNDLEEVGIDTYHHTMFEMLGNWSFGDYFKEEAIAWSWELLTSVYKLPKDRLYVTIFEGDDKEKLARDTEAYNFWKKWIAEDRILLGNKKDNFWEMGEQGPCGPCSEIHVDLRTDEEVKAVDGKTLVNNDHPQVVEIWNNVFIQFNRKADGSLEELPDKHVDTGMGFERLCMAIQKKKSNYDTDVFTPMIDFVAKAAGIKYGADEKTDIAMRVMADHIRAISFVIADGQLPSNNKAGYVIRRILRRAVRYAYTFLNLKEPFLYKLVAVLADQLAHVFPELKSQQDFVAKVVQEEEISFLRTLDIGLSKLEQIREELKAKKATTIDGKTAFELYDTFGFPLDLIQLIARENGLTVDEAGFDTEMAAQKQRSKKAASVETSDWTIVTEDDEVEFVGYDHLISTSRIIKYRQVKTKGKDQYQLVLDTTPFYAESGGQAGDTGTLVQGDKKIKVLNTVKENNLIIHITEQLPADLKAPVDCKVNVLQRSLTENNHSATHLLHAALKQVLGSHVNQKGSLVNESVLRFDFSHFSKVTEEELKKVELIVNEKIRENISLNERRNVPIEEAKKLGAMALFGEKYGEYVRMITFDDSFSRELCGGTHVSSTGKIGFFKITSESSVAAGVRRIEALTATAAEVFVDEQQTTLAKITELMKNPKDLVKSLEDLLEERIVLQKQLDEYQAEKSKAIAKSLKDTVEKVGDINVIRAKLVLPSVDAMRQVAYDLKQTVDNLLLVLAVNVDGKPNIAVMISDNLVADKGLNASQMIRELSKEIQGGGGGQPFYATAGGKELNGLDKVIAKSKDLIQVHA</sequence>
<organism>
    <name type="scientific">Cytophaga hutchinsonii (strain ATCC 33406 / DSM 1761 / CIP 103989 / NBRC 15051 / NCIMB 9469 / D465)</name>
    <dbReference type="NCBI Taxonomy" id="269798"/>
    <lineage>
        <taxon>Bacteria</taxon>
        <taxon>Pseudomonadati</taxon>
        <taxon>Bacteroidota</taxon>
        <taxon>Cytophagia</taxon>
        <taxon>Cytophagales</taxon>
        <taxon>Cytophagaceae</taxon>
        <taxon>Cytophaga</taxon>
    </lineage>
</organism>
<dbReference type="EC" id="6.1.1.7" evidence="1"/>
<dbReference type="EMBL" id="CP000383">
    <property type="protein sequence ID" value="ABG58717.1"/>
    <property type="molecule type" value="Genomic_DNA"/>
</dbReference>
<dbReference type="RefSeq" id="WP_011584832.1">
    <property type="nucleotide sequence ID" value="NC_008255.1"/>
</dbReference>
<dbReference type="SMR" id="Q11V49"/>
<dbReference type="STRING" id="269798.CHU_1446"/>
<dbReference type="KEGG" id="chu:CHU_1446"/>
<dbReference type="eggNOG" id="COG0013">
    <property type="taxonomic scope" value="Bacteria"/>
</dbReference>
<dbReference type="HOGENOM" id="CLU_004485_1_1_10"/>
<dbReference type="OrthoDB" id="9803884at2"/>
<dbReference type="Proteomes" id="UP000001822">
    <property type="component" value="Chromosome"/>
</dbReference>
<dbReference type="GO" id="GO:0005737">
    <property type="term" value="C:cytoplasm"/>
    <property type="evidence" value="ECO:0007669"/>
    <property type="project" value="UniProtKB-SubCell"/>
</dbReference>
<dbReference type="GO" id="GO:0004813">
    <property type="term" value="F:alanine-tRNA ligase activity"/>
    <property type="evidence" value="ECO:0007669"/>
    <property type="project" value="UniProtKB-UniRule"/>
</dbReference>
<dbReference type="GO" id="GO:0002161">
    <property type="term" value="F:aminoacyl-tRNA deacylase activity"/>
    <property type="evidence" value="ECO:0007669"/>
    <property type="project" value="TreeGrafter"/>
</dbReference>
<dbReference type="GO" id="GO:0005524">
    <property type="term" value="F:ATP binding"/>
    <property type="evidence" value="ECO:0007669"/>
    <property type="project" value="UniProtKB-UniRule"/>
</dbReference>
<dbReference type="GO" id="GO:0000049">
    <property type="term" value="F:tRNA binding"/>
    <property type="evidence" value="ECO:0007669"/>
    <property type="project" value="UniProtKB-KW"/>
</dbReference>
<dbReference type="GO" id="GO:0008270">
    <property type="term" value="F:zinc ion binding"/>
    <property type="evidence" value="ECO:0007669"/>
    <property type="project" value="UniProtKB-UniRule"/>
</dbReference>
<dbReference type="GO" id="GO:0006419">
    <property type="term" value="P:alanyl-tRNA aminoacylation"/>
    <property type="evidence" value="ECO:0007669"/>
    <property type="project" value="UniProtKB-UniRule"/>
</dbReference>
<dbReference type="CDD" id="cd00673">
    <property type="entry name" value="AlaRS_core"/>
    <property type="match status" value="1"/>
</dbReference>
<dbReference type="FunFam" id="3.10.310.40:FF:000001">
    <property type="entry name" value="Alanine--tRNA ligase"/>
    <property type="match status" value="1"/>
</dbReference>
<dbReference type="FunFam" id="3.30.54.20:FF:000001">
    <property type="entry name" value="Alanine--tRNA ligase"/>
    <property type="match status" value="1"/>
</dbReference>
<dbReference type="FunFam" id="3.30.930.10:FF:000011">
    <property type="entry name" value="Alanine--tRNA ligase, cytoplasmic"/>
    <property type="match status" value="1"/>
</dbReference>
<dbReference type="FunFam" id="3.30.980.10:FF:000004">
    <property type="entry name" value="Alanine--tRNA ligase, cytoplasmic"/>
    <property type="match status" value="1"/>
</dbReference>
<dbReference type="Gene3D" id="2.40.30.130">
    <property type="match status" value="1"/>
</dbReference>
<dbReference type="Gene3D" id="3.10.310.40">
    <property type="match status" value="1"/>
</dbReference>
<dbReference type="Gene3D" id="3.30.54.20">
    <property type="match status" value="1"/>
</dbReference>
<dbReference type="Gene3D" id="3.30.930.10">
    <property type="entry name" value="Bira Bifunctional Protein, Domain 2"/>
    <property type="match status" value="1"/>
</dbReference>
<dbReference type="Gene3D" id="3.30.980.10">
    <property type="entry name" value="Threonyl-trna Synthetase, Chain A, domain 2"/>
    <property type="match status" value="1"/>
</dbReference>
<dbReference type="HAMAP" id="MF_00036_B">
    <property type="entry name" value="Ala_tRNA_synth_B"/>
    <property type="match status" value="1"/>
</dbReference>
<dbReference type="InterPro" id="IPR045864">
    <property type="entry name" value="aa-tRNA-synth_II/BPL/LPL"/>
</dbReference>
<dbReference type="InterPro" id="IPR002318">
    <property type="entry name" value="Ala-tRNA-lgiase_IIc"/>
</dbReference>
<dbReference type="InterPro" id="IPR018162">
    <property type="entry name" value="Ala-tRNA-ligase_IIc_anticod-bd"/>
</dbReference>
<dbReference type="InterPro" id="IPR018165">
    <property type="entry name" value="Ala-tRNA-synth_IIc_core"/>
</dbReference>
<dbReference type="InterPro" id="IPR018164">
    <property type="entry name" value="Ala-tRNA-synth_IIc_N"/>
</dbReference>
<dbReference type="InterPro" id="IPR050058">
    <property type="entry name" value="Ala-tRNA_ligase"/>
</dbReference>
<dbReference type="InterPro" id="IPR023033">
    <property type="entry name" value="Ala_tRNA_ligase_euk/bac"/>
</dbReference>
<dbReference type="InterPro" id="IPR003156">
    <property type="entry name" value="DHHA1_dom"/>
</dbReference>
<dbReference type="InterPro" id="IPR018163">
    <property type="entry name" value="Thr/Ala-tRNA-synth_IIc_edit"/>
</dbReference>
<dbReference type="InterPro" id="IPR009000">
    <property type="entry name" value="Transl_B-barrel_sf"/>
</dbReference>
<dbReference type="InterPro" id="IPR012947">
    <property type="entry name" value="tRNA_SAD"/>
</dbReference>
<dbReference type="NCBIfam" id="TIGR00344">
    <property type="entry name" value="alaS"/>
    <property type="match status" value="1"/>
</dbReference>
<dbReference type="PANTHER" id="PTHR11777:SF9">
    <property type="entry name" value="ALANINE--TRNA LIGASE, CYTOPLASMIC"/>
    <property type="match status" value="1"/>
</dbReference>
<dbReference type="PANTHER" id="PTHR11777">
    <property type="entry name" value="ALANYL-TRNA SYNTHETASE"/>
    <property type="match status" value="1"/>
</dbReference>
<dbReference type="Pfam" id="PF02272">
    <property type="entry name" value="DHHA1"/>
    <property type="match status" value="1"/>
</dbReference>
<dbReference type="Pfam" id="PF01411">
    <property type="entry name" value="tRNA-synt_2c"/>
    <property type="match status" value="1"/>
</dbReference>
<dbReference type="Pfam" id="PF07973">
    <property type="entry name" value="tRNA_SAD"/>
    <property type="match status" value="1"/>
</dbReference>
<dbReference type="PRINTS" id="PR00980">
    <property type="entry name" value="TRNASYNTHALA"/>
</dbReference>
<dbReference type="SMART" id="SM00863">
    <property type="entry name" value="tRNA_SAD"/>
    <property type="match status" value="1"/>
</dbReference>
<dbReference type="SUPFAM" id="SSF55681">
    <property type="entry name" value="Class II aaRS and biotin synthetases"/>
    <property type="match status" value="1"/>
</dbReference>
<dbReference type="SUPFAM" id="SSF101353">
    <property type="entry name" value="Putative anticodon-binding domain of alanyl-tRNA synthetase (AlaRS)"/>
    <property type="match status" value="1"/>
</dbReference>
<dbReference type="SUPFAM" id="SSF55186">
    <property type="entry name" value="ThrRS/AlaRS common domain"/>
    <property type="match status" value="1"/>
</dbReference>
<dbReference type="SUPFAM" id="SSF50447">
    <property type="entry name" value="Translation proteins"/>
    <property type="match status" value="1"/>
</dbReference>
<dbReference type="PROSITE" id="PS50860">
    <property type="entry name" value="AA_TRNA_LIGASE_II_ALA"/>
    <property type="match status" value="1"/>
</dbReference>
<name>SYA_CYTH3</name>
<gene>
    <name evidence="1" type="primary">alaS</name>
    <name type="ordered locus">CHU_1446</name>
</gene>
<keyword id="KW-0030">Aminoacyl-tRNA synthetase</keyword>
<keyword id="KW-0067">ATP-binding</keyword>
<keyword id="KW-0963">Cytoplasm</keyword>
<keyword id="KW-0436">Ligase</keyword>
<keyword id="KW-0479">Metal-binding</keyword>
<keyword id="KW-0547">Nucleotide-binding</keyword>
<keyword id="KW-0648">Protein biosynthesis</keyword>
<keyword id="KW-1185">Reference proteome</keyword>
<keyword id="KW-0694">RNA-binding</keyword>
<keyword id="KW-0820">tRNA-binding</keyword>
<keyword id="KW-0862">Zinc</keyword>